<keyword id="KW-0020">Allergen</keyword>
<keyword id="KW-0903">Direct protein sequencing</keyword>
<keyword id="KW-1015">Disulfide bond</keyword>
<keyword id="KW-0708">Seed storage protein</keyword>
<keyword id="KW-0758">Storage protein</keyword>
<organism>
    <name type="scientific">Sinapis alba</name>
    <name type="common">White mustard</name>
    <name type="synonym">Brassica hirta</name>
    <dbReference type="NCBI Taxonomy" id="3728"/>
    <lineage>
        <taxon>Eukaryota</taxon>
        <taxon>Viridiplantae</taxon>
        <taxon>Streptophyta</taxon>
        <taxon>Embryophyta</taxon>
        <taxon>Tracheophyta</taxon>
        <taxon>Spermatophyta</taxon>
        <taxon>Magnoliopsida</taxon>
        <taxon>eudicotyledons</taxon>
        <taxon>Gunneridae</taxon>
        <taxon>Pentapetalae</taxon>
        <taxon>rosids</taxon>
        <taxon>malvids</taxon>
        <taxon>Brassicales</taxon>
        <taxon>Brassicaceae</taxon>
        <taxon>Brassiceae</taxon>
        <taxon>Sinapis</taxon>
    </lineage>
</organism>
<name>ALL1_SINAL</name>
<evidence type="ECO:0000256" key="1">
    <source>
        <dbReference type="SAM" id="MobiDB-lite"/>
    </source>
</evidence>
<evidence type="ECO:0000269" key="2">
    <source>
    </source>
</evidence>
<evidence type="ECO:0000269" key="3">
    <source>
    </source>
</evidence>
<evidence type="ECO:0000269" key="4">
    <source>
    </source>
</evidence>
<evidence type="ECO:0000305" key="5"/>
<reference key="1">
    <citation type="journal article" date="1993" name="Biochem. Biophys. Res. Commun.">
        <title>Cloning and expression of the major allergen from yellow mustard seeds, Sin a I.</title>
        <authorList>
            <person name="Gonzalez de la Pena M.A."/>
            <person name="Villalba M."/>
            <person name="Garcia-Lopez J.L."/>
            <person name="Rodriguez R."/>
        </authorList>
    </citation>
    <scope>NUCLEOTIDE SEQUENCE [GENOMIC DNA]</scope>
    <scope>VARIANTS GLY-36; LEU-40; ALA-41; 43-ASP-ASP-44 DELINS TYR-GLY; GLU-100 AND GLN-111</scope>
</reference>
<reference key="2">
    <citation type="journal article" date="1996" name="Eur. J. Biochem.">
        <title>Expression in Escherichia coli of the major allergen from mustard, Sin a 1.</title>
        <authorList>
            <person name="Gonzalez de la Peya M.A."/>
            <person name="Monsalve R.I."/>
            <person name="Batanero E."/>
            <person name="Villalba M."/>
            <person name="Rodriguez R."/>
        </authorList>
    </citation>
    <scope>NUCLEOTIDE SEQUENCE [GENOMIC DNA]</scope>
    <scope>VARIANTS GLY-6; 43-ASP-ASP-44 DELINS GLU-GLY; LYS-61; GLU-100; 108-HIS-LEU-109 DELINS GLN-VAL; GLN-111; ARG-125; PRO-130 AND GLN-138</scope>
    <source>
        <tissue>Seed</tissue>
    </source>
</reference>
<reference key="3">
    <citation type="journal article" date="1988" name="Eur. J. Biochem.">
        <title>Primary structure of the major allergen of yellow mustard (Sinapis alba L.) seed, Sin a I.</title>
        <authorList>
            <person name="Menendez-Arias L."/>
            <person name="Moneo I."/>
            <person name="Dominguez J."/>
            <person name="Rodriguez R."/>
        </authorList>
    </citation>
    <scope>PROTEIN SEQUENCE OF 1-39 AND 55-145</scope>
    <scope>VARIANTS GLY-6; GLU-100 AND PRO-130</scope>
    <source>
        <tissue>Seed</tissue>
    </source>
</reference>
<feature type="chain" id="PRO_0000032167" description="Allergen Sin a 1 small chain">
    <location>
        <begin position="1"/>
        <end position="39"/>
    </location>
</feature>
<feature type="propeptide" id="PRO_0000032168" evidence="2">
    <location>
        <begin position="40"/>
        <end position="54"/>
    </location>
</feature>
<feature type="chain" id="PRO_0000032169" description="Allergen Sin a 1 large chain">
    <location>
        <begin position="55"/>
        <end position="145"/>
    </location>
</feature>
<feature type="region of interest" description="Disordered" evidence="1">
    <location>
        <begin position="34"/>
        <end position="62"/>
    </location>
</feature>
<feature type="compositionally biased region" description="Acidic residues" evidence="1">
    <location>
        <begin position="42"/>
        <end position="53"/>
    </location>
</feature>
<feature type="sequence variant" description="In 1.0101, 1.0104/SIN1, 1.0106/SIN3 and 1.0108/SIN5." evidence="2 4">
    <original>R</original>
    <variation>G</variation>
    <location>
        <position position="6"/>
    </location>
</feature>
<feature type="sequence variant" description="In 1.0103/SA2S2." evidence="3">
    <original>S</original>
    <variation>G</variation>
    <location>
        <position position="36"/>
    </location>
</feature>
<feature type="sequence variant" description="In 1.0103/SA2S2." evidence="3">
    <original>W</original>
    <variation>L</variation>
    <location>
        <position position="40"/>
    </location>
</feature>
<feature type="sequence variant" description="In 1.0103/SA2S2." evidence="3">
    <original>T</original>
    <variation>A</variation>
    <location>
        <position position="41"/>
    </location>
</feature>
<feature type="sequence variant" description="In 1.0105/SIN2." evidence="4">
    <original>DD</original>
    <variation>EG</variation>
    <location>
        <begin position="43"/>
        <end position="44"/>
    </location>
</feature>
<feature type="sequence variant" description="In 1.0103/SA2S2." evidence="3">
    <original>DD</original>
    <variation>YG</variation>
    <location>
        <begin position="43"/>
        <end position="44"/>
    </location>
</feature>
<feature type="sequence variant" description="In 1.0108/SIN5." evidence="4">
    <original>R</original>
    <variation>K</variation>
    <location>
        <position position="61"/>
    </location>
</feature>
<feature type="sequence variant" description="In 1.0101, 1.0103/SA2S2, 1.0104/SIN1, 1.0105/SIN2 and 1.0107/SIN4." evidence="2 3 4">
    <original>G</original>
    <variation>E</variation>
    <location>
        <position position="100"/>
    </location>
</feature>
<feature type="sequence variant" description="In 1.0106/SIN3 and 1.0108/SIN5." evidence="4">
    <original>HL</original>
    <variation>QV</variation>
    <location>
        <begin position="108"/>
        <end position="109"/>
    </location>
</feature>
<feature type="sequence variant" description="In 1.0103/SA2S2." evidence="3 4">
    <original>H</original>
    <variation>Q</variation>
    <location>
        <position position="111"/>
    </location>
</feature>
<feature type="sequence variant" description="In 1.0104/SIN1." evidence="4">
    <original>K</original>
    <variation>R</variation>
    <location>
        <position position="125"/>
    </location>
</feature>
<feature type="sequence variant" description="In 1.0101, 1.0105/SIN2, 1.0106/SIN3, 1.0107/SIN4 and 1.0108/SIN5." evidence="2 4">
    <original>R</original>
    <variation>P</variation>
    <location>
        <position position="130"/>
    </location>
</feature>
<feature type="sequence variant" description="In 1.0104/SIN1." evidence="4">
    <original>K</original>
    <variation>Q</variation>
    <location>
        <position position="138"/>
    </location>
</feature>
<feature type="sequence conflict" description="In Ref. 3; AA sequence." evidence="5" ref="3">
    <location>
        <begin position="108"/>
        <end position="110"/>
    </location>
</feature>
<dbReference type="EMBL" id="S54101">
    <property type="protein sequence ID" value="AAB25214.2"/>
    <property type="molecule type" value="Genomic_DNA"/>
</dbReference>
<dbReference type="EMBL" id="X91798">
    <property type="protein sequence ID" value="CAA62908.1"/>
    <property type="molecule type" value="Genomic_DNA"/>
</dbReference>
<dbReference type="EMBL" id="X91799">
    <property type="protein sequence ID" value="CAA62909.1"/>
    <property type="molecule type" value="Genomic_DNA"/>
</dbReference>
<dbReference type="EMBL" id="X91800">
    <property type="protein sequence ID" value="CAA62910.1"/>
    <property type="molecule type" value="Genomic_DNA"/>
</dbReference>
<dbReference type="EMBL" id="X91801">
    <property type="protein sequence ID" value="CAA62911.1"/>
    <property type="molecule type" value="Genomic_DNA"/>
</dbReference>
<dbReference type="EMBL" id="X91802">
    <property type="protein sequence ID" value="CAA62912.1"/>
    <property type="molecule type" value="Genomic_DNA"/>
</dbReference>
<dbReference type="PIR" id="PC1246">
    <property type="entry name" value="PC1246"/>
</dbReference>
<dbReference type="PIR" id="PC1247">
    <property type="entry name" value="PC1247"/>
</dbReference>
<dbReference type="PIR" id="S01791">
    <property type="entry name" value="S01791"/>
</dbReference>
<dbReference type="PIR" id="S65447">
    <property type="entry name" value="S65447"/>
</dbReference>
<dbReference type="PIR" id="S65478">
    <property type="entry name" value="S65478"/>
</dbReference>
<dbReference type="PIR" id="S65479">
    <property type="entry name" value="S65479"/>
</dbReference>
<dbReference type="PIR" id="S65480">
    <property type="entry name" value="S65480"/>
</dbReference>
<dbReference type="PIR" id="S65481">
    <property type="entry name" value="S65481"/>
</dbReference>
<dbReference type="PIR" id="S65482">
    <property type="entry name" value="S65482"/>
</dbReference>
<dbReference type="Allergome" id="3477">
    <property type="allergen name" value="Sin a 1.0101"/>
</dbReference>
<dbReference type="Allergome" id="627">
    <property type="allergen name" value="Sin a 1"/>
</dbReference>
<dbReference type="GO" id="GO:0045735">
    <property type="term" value="F:nutrient reservoir activity"/>
    <property type="evidence" value="ECO:0007669"/>
    <property type="project" value="UniProtKB-KW"/>
</dbReference>
<dbReference type="Gene3D" id="1.10.110.10">
    <property type="entry name" value="Plant lipid-transfer and hydrophobic proteins"/>
    <property type="match status" value="1"/>
</dbReference>
<dbReference type="InterPro" id="IPR036312">
    <property type="entry name" value="Bifun_inhib/LTP/seed_sf"/>
</dbReference>
<dbReference type="InterPro" id="IPR016140">
    <property type="entry name" value="Bifunc_inhib/LTP/seed_store"/>
</dbReference>
<dbReference type="InterPro" id="IPR000617">
    <property type="entry name" value="Napin/2SS/CON"/>
</dbReference>
<dbReference type="PANTHER" id="PTHR35496">
    <property type="entry name" value="2S SEED STORAGE PROTEIN 1-RELATED"/>
    <property type="match status" value="1"/>
</dbReference>
<dbReference type="PANTHER" id="PTHR35496:SF11">
    <property type="entry name" value="BIFUNCTIONAL INHIBITOR_PLANT LIPID TRANSFER PROTEIN_SEED STORAGE HELICAL DOMAIN-CONTAINING PROTEIN"/>
    <property type="match status" value="1"/>
</dbReference>
<dbReference type="Pfam" id="PF00234">
    <property type="entry name" value="Tryp_alpha_amyl"/>
    <property type="match status" value="1"/>
</dbReference>
<dbReference type="PRINTS" id="PR00496">
    <property type="entry name" value="NAPIN"/>
</dbReference>
<dbReference type="SMART" id="SM00499">
    <property type="entry name" value="AAI"/>
    <property type="match status" value="1"/>
</dbReference>
<dbReference type="SUPFAM" id="SSF47699">
    <property type="entry name" value="Bifunctional inhibitor/lipid-transfer protein/seed storage 2S albumin"/>
    <property type="match status" value="1"/>
</dbReference>
<comment type="function">
    <text>This is a 2S seed storage protein.</text>
</comment>
<comment type="subunit">
    <text>The protein consists of two chains linked by disulfide bonds.</text>
</comment>
<comment type="polymorphism">
    <text evidence="2 3 4">There seems to be at least 8 variants: 1.0101 (PubMed:3181153), 1.0102/SA2S1 (PubMed:8093997), 1.0103/SA2S2 (PubMed:8093997), 1.0104/SIN1 (PubMed:8647131), 1.0105/SIN2 (PubMed:8647131), 1.0106/SIN3 (PubMed:8647131), 1.0107/SIN4 (PubMed:8647131), and 1.0108/SIN5 (PubMed:8647131).</text>
</comment>
<comment type="allergen">
    <text>Causes an allergic reaction in human. Causes cabbage allergy.</text>
</comment>
<comment type="similarity">
    <text evidence="5">Belongs to the 2S seed storage albumins family.</text>
</comment>
<accession>P15322</accession>
<accession>Q41196</accession>
<accession>Q41277</accession>
<accession>Q41278</accession>
<accession>Q41279</accession>
<accession>Q41280</accession>
<accession>Q41281</accession>
<protein>
    <recommendedName>
        <fullName>Allergen Sin a 1</fullName>
    </recommendedName>
    <alternativeName>
        <fullName>Allergen Sin a I</fullName>
    </alternativeName>
    <allergenName>Sin a 1</allergenName>
    <component>
        <recommendedName>
            <fullName>Allergen Sin a 1 small chain</fullName>
        </recommendedName>
    </component>
    <component>
        <recommendedName>
            <fullName>Allergen Sin a 1 large chain</fullName>
        </recommendedName>
    </component>
</protein>
<proteinExistence type="evidence at protein level"/>
<sequence length="145" mass="16449">PAGPFRIPKCRKEFQQAQHLRACQQWLHKQAMQSGSGPSWTLDDEFDFEDDMENPQGPQQRPPLLQQCCNELHQEEPLCVCPTLKGASKAVKQQVRQQLGQQGQQGPHLQHVISRIYQTATHLPKVCNIRQVSVCPFKKTMPGPS</sequence>